<feature type="chain" id="PRO_0000367605" description="Glutamate--tRNA ligase 1">
    <location>
        <begin position="1"/>
        <end position="471"/>
    </location>
</feature>
<feature type="short sequence motif" description="'HIGH' region" evidence="1">
    <location>
        <begin position="10"/>
        <end position="20"/>
    </location>
</feature>
<feature type="short sequence motif" description="'KMSKS' region" evidence="1">
    <location>
        <begin position="238"/>
        <end position="242"/>
    </location>
</feature>
<feature type="binding site" evidence="1">
    <location>
        <position position="99"/>
    </location>
    <ligand>
        <name>Zn(2+)</name>
        <dbReference type="ChEBI" id="CHEBI:29105"/>
    </ligand>
</feature>
<feature type="binding site" evidence="1">
    <location>
        <position position="101"/>
    </location>
    <ligand>
        <name>Zn(2+)</name>
        <dbReference type="ChEBI" id="CHEBI:29105"/>
    </ligand>
</feature>
<feature type="binding site" evidence="1">
    <location>
        <position position="126"/>
    </location>
    <ligand>
        <name>Zn(2+)</name>
        <dbReference type="ChEBI" id="CHEBI:29105"/>
    </ligand>
</feature>
<feature type="binding site" evidence="1">
    <location>
        <position position="128"/>
    </location>
    <ligand>
        <name>Zn(2+)</name>
        <dbReference type="ChEBI" id="CHEBI:29105"/>
    </ligand>
</feature>
<feature type="binding site" evidence="1">
    <location>
        <position position="241"/>
    </location>
    <ligand>
        <name>ATP</name>
        <dbReference type="ChEBI" id="CHEBI:30616"/>
    </ligand>
</feature>
<dbReference type="EC" id="6.1.1.17" evidence="1"/>
<dbReference type="EMBL" id="CP000453">
    <property type="protein sequence ID" value="ABI56651.1"/>
    <property type="molecule type" value="Genomic_DNA"/>
</dbReference>
<dbReference type="RefSeq" id="WP_011629046.1">
    <property type="nucleotide sequence ID" value="NC_008340.1"/>
</dbReference>
<dbReference type="SMR" id="Q0A936"/>
<dbReference type="KEGG" id="aeh:Mlg_1302"/>
<dbReference type="eggNOG" id="COG0008">
    <property type="taxonomic scope" value="Bacteria"/>
</dbReference>
<dbReference type="HOGENOM" id="CLU_015768_6_0_6"/>
<dbReference type="OrthoDB" id="9807503at2"/>
<dbReference type="Proteomes" id="UP000001962">
    <property type="component" value="Chromosome"/>
</dbReference>
<dbReference type="GO" id="GO:0005829">
    <property type="term" value="C:cytosol"/>
    <property type="evidence" value="ECO:0007669"/>
    <property type="project" value="TreeGrafter"/>
</dbReference>
<dbReference type="GO" id="GO:0005524">
    <property type="term" value="F:ATP binding"/>
    <property type="evidence" value="ECO:0007669"/>
    <property type="project" value="UniProtKB-UniRule"/>
</dbReference>
<dbReference type="GO" id="GO:0004818">
    <property type="term" value="F:glutamate-tRNA ligase activity"/>
    <property type="evidence" value="ECO:0007669"/>
    <property type="project" value="UniProtKB-UniRule"/>
</dbReference>
<dbReference type="GO" id="GO:0000049">
    <property type="term" value="F:tRNA binding"/>
    <property type="evidence" value="ECO:0007669"/>
    <property type="project" value="InterPro"/>
</dbReference>
<dbReference type="GO" id="GO:0008270">
    <property type="term" value="F:zinc ion binding"/>
    <property type="evidence" value="ECO:0007669"/>
    <property type="project" value="UniProtKB-UniRule"/>
</dbReference>
<dbReference type="GO" id="GO:0006424">
    <property type="term" value="P:glutamyl-tRNA aminoacylation"/>
    <property type="evidence" value="ECO:0007669"/>
    <property type="project" value="UniProtKB-UniRule"/>
</dbReference>
<dbReference type="CDD" id="cd00808">
    <property type="entry name" value="GluRS_core"/>
    <property type="match status" value="1"/>
</dbReference>
<dbReference type="FunFam" id="3.40.50.620:FF:000007">
    <property type="entry name" value="Glutamate--tRNA ligase"/>
    <property type="match status" value="1"/>
</dbReference>
<dbReference type="Gene3D" id="1.10.10.350">
    <property type="match status" value="1"/>
</dbReference>
<dbReference type="Gene3D" id="3.40.50.620">
    <property type="entry name" value="HUPs"/>
    <property type="match status" value="1"/>
</dbReference>
<dbReference type="HAMAP" id="MF_00022">
    <property type="entry name" value="Glu_tRNA_synth_type1"/>
    <property type="match status" value="1"/>
</dbReference>
<dbReference type="InterPro" id="IPR045462">
    <property type="entry name" value="aa-tRNA-synth_I_cd-bd"/>
</dbReference>
<dbReference type="InterPro" id="IPR020751">
    <property type="entry name" value="aa-tRNA-synth_I_codon-bd_sub2"/>
</dbReference>
<dbReference type="InterPro" id="IPR001412">
    <property type="entry name" value="aa-tRNA-synth_I_CS"/>
</dbReference>
<dbReference type="InterPro" id="IPR008925">
    <property type="entry name" value="aa_tRNA-synth_I_cd-bd_sf"/>
</dbReference>
<dbReference type="InterPro" id="IPR004527">
    <property type="entry name" value="Glu-tRNA-ligase_bac/mito"/>
</dbReference>
<dbReference type="InterPro" id="IPR000924">
    <property type="entry name" value="Glu/Gln-tRNA-synth"/>
</dbReference>
<dbReference type="InterPro" id="IPR020058">
    <property type="entry name" value="Glu/Gln-tRNA-synth_Ib_cat-dom"/>
</dbReference>
<dbReference type="InterPro" id="IPR049940">
    <property type="entry name" value="GluQ/Sye"/>
</dbReference>
<dbReference type="InterPro" id="IPR033910">
    <property type="entry name" value="GluRS_core"/>
</dbReference>
<dbReference type="InterPro" id="IPR014729">
    <property type="entry name" value="Rossmann-like_a/b/a_fold"/>
</dbReference>
<dbReference type="NCBIfam" id="TIGR00464">
    <property type="entry name" value="gltX_bact"/>
    <property type="match status" value="1"/>
</dbReference>
<dbReference type="PANTHER" id="PTHR43311">
    <property type="entry name" value="GLUTAMATE--TRNA LIGASE"/>
    <property type="match status" value="1"/>
</dbReference>
<dbReference type="PANTHER" id="PTHR43311:SF2">
    <property type="entry name" value="GLUTAMATE--TRNA LIGASE, MITOCHONDRIAL-RELATED"/>
    <property type="match status" value="1"/>
</dbReference>
<dbReference type="Pfam" id="PF19269">
    <property type="entry name" value="Anticodon_2"/>
    <property type="match status" value="1"/>
</dbReference>
<dbReference type="Pfam" id="PF00749">
    <property type="entry name" value="tRNA-synt_1c"/>
    <property type="match status" value="1"/>
</dbReference>
<dbReference type="PRINTS" id="PR00987">
    <property type="entry name" value="TRNASYNTHGLU"/>
</dbReference>
<dbReference type="SUPFAM" id="SSF48163">
    <property type="entry name" value="An anticodon-binding domain of class I aminoacyl-tRNA synthetases"/>
    <property type="match status" value="1"/>
</dbReference>
<dbReference type="SUPFAM" id="SSF52374">
    <property type="entry name" value="Nucleotidylyl transferase"/>
    <property type="match status" value="1"/>
</dbReference>
<dbReference type="PROSITE" id="PS00178">
    <property type="entry name" value="AA_TRNA_LIGASE_I"/>
    <property type="match status" value="1"/>
</dbReference>
<comment type="function">
    <text evidence="1">Catalyzes the attachment of glutamate to tRNA(Glu) in a two-step reaction: glutamate is first activated by ATP to form Glu-AMP and then transferred to the acceptor end of tRNA(Glu).</text>
</comment>
<comment type="catalytic activity">
    <reaction evidence="1">
        <text>tRNA(Glu) + L-glutamate + ATP = L-glutamyl-tRNA(Glu) + AMP + diphosphate</text>
        <dbReference type="Rhea" id="RHEA:23540"/>
        <dbReference type="Rhea" id="RHEA-COMP:9663"/>
        <dbReference type="Rhea" id="RHEA-COMP:9680"/>
        <dbReference type="ChEBI" id="CHEBI:29985"/>
        <dbReference type="ChEBI" id="CHEBI:30616"/>
        <dbReference type="ChEBI" id="CHEBI:33019"/>
        <dbReference type="ChEBI" id="CHEBI:78442"/>
        <dbReference type="ChEBI" id="CHEBI:78520"/>
        <dbReference type="ChEBI" id="CHEBI:456215"/>
        <dbReference type="EC" id="6.1.1.17"/>
    </reaction>
</comment>
<comment type="cofactor">
    <cofactor evidence="1">
        <name>Zn(2+)</name>
        <dbReference type="ChEBI" id="CHEBI:29105"/>
    </cofactor>
    <text evidence="1">Binds 1 zinc ion per subunit.</text>
</comment>
<comment type="subunit">
    <text evidence="1">Monomer.</text>
</comment>
<comment type="subcellular location">
    <subcellularLocation>
        <location evidence="1">Cytoplasm</location>
    </subcellularLocation>
</comment>
<comment type="similarity">
    <text evidence="1">Belongs to the class-I aminoacyl-tRNA synthetase family. Glutamate--tRNA ligase type 1 subfamily.</text>
</comment>
<keyword id="KW-0030">Aminoacyl-tRNA synthetase</keyword>
<keyword id="KW-0067">ATP-binding</keyword>
<keyword id="KW-0963">Cytoplasm</keyword>
<keyword id="KW-0436">Ligase</keyword>
<keyword id="KW-0479">Metal-binding</keyword>
<keyword id="KW-0547">Nucleotide-binding</keyword>
<keyword id="KW-0648">Protein biosynthesis</keyword>
<keyword id="KW-1185">Reference proteome</keyword>
<keyword id="KW-0862">Zinc</keyword>
<organism>
    <name type="scientific">Alkalilimnicola ehrlichii (strain ATCC BAA-1101 / DSM 17681 / MLHE-1)</name>
    <dbReference type="NCBI Taxonomy" id="187272"/>
    <lineage>
        <taxon>Bacteria</taxon>
        <taxon>Pseudomonadati</taxon>
        <taxon>Pseudomonadota</taxon>
        <taxon>Gammaproteobacteria</taxon>
        <taxon>Chromatiales</taxon>
        <taxon>Ectothiorhodospiraceae</taxon>
        <taxon>Alkalilimnicola</taxon>
    </lineage>
</organism>
<protein>
    <recommendedName>
        <fullName evidence="1">Glutamate--tRNA ligase 1</fullName>
        <ecNumber evidence="1">6.1.1.17</ecNumber>
    </recommendedName>
    <alternativeName>
        <fullName evidence="1">Glutamyl-tRNA synthetase 1</fullName>
        <shortName evidence="1">GluRS 1</shortName>
    </alternativeName>
</protein>
<proteinExistence type="inferred from homology"/>
<sequence length="471" mass="53465">MAKIKTRFAPSPTGYLHIGGARTALYSWLYARRHGGHFVLRIEDTDRERSTQESVNVILEGMSWLGLDYDEGPFYQTERFDRYRELTQRLLDEGLAYRCYCSKERLDALRQEQMANKQKPRYDGRCRDLTEPPEGAGEPVIRFRNPLDGEVVVEDRVRGRVVFRNSELDDLIIARADGTPTYNFTVVVDDMDMGITHVVRGDDHLNNTPRQVNLYRALGVEPPVFAHVPMILGEDGKRLSKRHGAVSVLQYRDQGYLPEAVLNYLVRLGWSHGDQEVFTLDEMVSLFDLEDINHSASTFNPQKLLWLNQQHIMRAEPAHVARYLAHHLGERDIDPADGPPLEAVVAAQQERAKTLVEMAENSLFFYRDPADYEPKAARKNLKPETEAALVRVRDLLSELEDWRPEAIHECVLKAAEVLELKLGKVAQPVRVAVSGGPVSPPIDQTLALLGKEATLRRIQAAIDWIDRQAAG</sequence>
<reference key="1">
    <citation type="submission" date="2006-08" db="EMBL/GenBank/DDBJ databases">
        <title>Complete sequence of Alkalilimnicola ehrilichei MLHE-1.</title>
        <authorList>
            <person name="Copeland A."/>
            <person name="Lucas S."/>
            <person name="Lapidus A."/>
            <person name="Barry K."/>
            <person name="Detter J.C."/>
            <person name="Glavina del Rio T."/>
            <person name="Hammon N."/>
            <person name="Israni S."/>
            <person name="Dalin E."/>
            <person name="Tice H."/>
            <person name="Pitluck S."/>
            <person name="Sims D."/>
            <person name="Brettin T."/>
            <person name="Bruce D."/>
            <person name="Han C."/>
            <person name="Tapia R."/>
            <person name="Gilna P."/>
            <person name="Schmutz J."/>
            <person name="Larimer F."/>
            <person name="Land M."/>
            <person name="Hauser L."/>
            <person name="Kyrpides N."/>
            <person name="Mikhailova N."/>
            <person name="Oremland R.S."/>
            <person name="Hoeft S.E."/>
            <person name="Switzer-Blum J."/>
            <person name="Kulp T."/>
            <person name="King G."/>
            <person name="Tabita R."/>
            <person name="Witte B."/>
            <person name="Santini J.M."/>
            <person name="Basu P."/>
            <person name="Hollibaugh J.T."/>
            <person name="Xie G."/>
            <person name="Stolz J.F."/>
            <person name="Richardson P."/>
        </authorList>
    </citation>
    <scope>NUCLEOTIDE SEQUENCE [LARGE SCALE GENOMIC DNA]</scope>
    <source>
        <strain>ATCC BAA-1101 / DSM 17681 / MLHE-1</strain>
    </source>
</reference>
<accession>Q0A936</accession>
<name>SYE1_ALKEH</name>
<gene>
    <name evidence="1" type="primary">gltX1</name>
    <name type="ordered locus">Mlg_1302</name>
</gene>
<evidence type="ECO:0000255" key="1">
    <source>
        <dbReference type="HAMAP-Rule" id="MF_00022"/>
    </source>
</evidence>